<name>F16PC_CLOBK</name>
<gene>
    <name evidence="1" type="primary">fbp</name>
    <name type="ordered locus">CLD_0233</name>
</gene>
<accession>B1IF28</accession>
<protein>
    <recommendedName>
        <fullName evidence="1">Fructose-1,6-bisphosphatase class 3</fullName>
        <shortName evidence="1">FBPase class 3</shortName>
        <ecNumber evidence="1">3.1.3.11</ecNumber>
    </recommendedName>
    <alternativeName>
        <fullName evidence="1">D-fructose-1,6-bisphosphate 1-phosphohydrolase class 3</fullName>
    </alternativeName>
</protein>
<sequence length="668" mass="77351">MTLYDENNLHIIKDNLRYLKLLSKQYPSISSASSEIINLQAILNLPKGTEHFISDVHGEYESFTHMLKNASGVIKRKIDDVFGTSLRECDKKNLATLIYYPEQKLDLIKKSEKNLEDWYKITLYRLIRLCQIVSSKYTRSKVRKSLPSDFAYIIEELLNEQGDRVDKQEYYNSIIETIIDIDRASEFIIAISNVIQRLVVDKLHIIGDIYDRGPGAEIIIEALSKHHSIDIQWGNHDIVWMGAAAGCEACIANVIRISLRYANLSTLEDGYGINLLPLATFAMDFYKEDNCENFKPRTIDKNLNETDIKLLSKMHKAISIIQFKLEGKIIKRRPEFKMEERLLLDKINIKEGTLNLSEKIYKLIDTNFPTLDKENPYELNERERDLVEKLTNSFINSEKLQRHIKFLYSNGSLYLKYNSNLLYHGCIPLNEDGSLKEVTLCKETLKGKSLLDKLDRLAREAYFFKKDPESKLYGMDMMWYLWCGSNSPLFGKKKMTTFERYFLDDKNTHKEEKNPYYKYRNDEKMCTMIFEEFELDADNSHIINGHIPVKTKEGENPIKANGKLLVIDGGFCKAYQPQTGIAGYTLIYNSYGLLLTSHEPFSSIHKAIVEGNDILSSTTILEHVSSRKRVLDTDSGEEIKKQIHDLEMLLVAYRKGLIKEENEANIRF</sequence>
<organism>
    <name type="scientific">Clostridium botulinum (strain Okra / Type B1)</name>
    <dbReference type="NCBI Taxonomy" id="498213"/>
    <lineage>
        <taxon>Bacteria</taxon>
        <taxon>Bacillati</taxon>
        <taxon>Bacillota</taxon>
        <taxon>Clostridia</taxon>
        <taxon>Eubacteriales</taxon>
        <taxon>Clostridiaceae</taxon>
        <taxon>Clostridium</taxon>
    </lineage>
</organism>
<proteinExistence type="inferred from homology"/>
<evidence type="ECO:0000255" key="1">
    <source>
        <dbReference type="HAMAP-Rule" id="MF_01854"/>
    </source>
</evidence>
<keyword id="KW-0119">Carbohydrate metabolism</keyword>
<keyword id="KW-0378">Hydrolase</keyword>
<keyword id="KW-0464">Manganese</keyword>
<comment type="catalytic activity">
    <reaction evidence="1">
        <text>beta-D-fructose 1,6-bisphosphate + H2O = beta-D-fructose 6-phosphate + phosphate</text>
        <dbReference type="Rhea" id="RHEA:11064"/>
        <dbReference type="ChEBI" id="CHEBI:15377"/>
        <dbReference type="ChEBI" id="CHEBI:32966"/>
        <dbReference type="ChEBI" id="CHEBI:43474"/>
        <dbReference type="ChEBI" id="CHEBI:57634"/>
        <dbReference type="EC" id="3.1.3.11"/>
    </reaction>
</comment>
<comment type="cofactor">
    <cofactor evidence="1">
        <name>Mn(2+)</name>
        <dbReference type="ChEBI" id="CHEBI:29035"/>
    </cofactor>
</comment>
<comment type="pathway">
    <text evidence="1">Carbohydrate biosynthesis; gluconeogenesis.</text>
</comment>
<comment type="similarity">
    <text evidence="1">Belongs to the FBPase class 3 family.</text>
</comment>
<reference key="1">
    <citation type="journal article" date="2007" name="PLoS ONE">
        <title>Analysis of the neurotoxin complex genes in Clostridium botulinum A1-A4 and B1 strains: BoNT/A3, /Ba4 and /B1 clusters are located within plasmids.</title>
        <authorList>
            <person name="Smith T.J."/>
            <person name="Hill K.K."/>
            <person name="Foley B.T."/>
            <person name="Detter J.C."/>
            <person name="Munk A.C."/>
            <person name="Bruce D.C."/>
            <person name="Doggett N.A."/>
            <person name="Smith L.A."/>
            <person name="Marks J.D."/>
            <person name="Xie G."/>
            <person name="Brettin T.S."/>
        </authorList>
    </citation>
    <scope>NUCLEOTIDE SEQUENCE [LARGE SCALE GENOMIC DNA]</scope>
    <source>
        <strain>Okra / Type B1</strain>
    </source>
</reference>
<dbReference type="EC" id="3.1.3.11" evidence="1"/>
<dbReference type="EMBL" id="CP000939">
    <property type="protein sequence ID" value="ACA46425.1"/>
    <property type="molecule type" value="Genomic_DNA"/>
</dbReference>
<dbReference type="RefSeq" id="WP_004451239.1">
    <property type="nucleotide sequence ID" value="NC_010516.1"/>
</dbReference>
<dbReference type="KEGG" id="cbb:CLD_0233"/>
<dbReference type="HOGENOM" id="CLU_028392_2_0_9"/>
<dbReference type="UniPathway" id="UPA00138"/>
<dbReference type="Proteomes" id="UP000008541">
    <property type="component" value="Chromosome"/>
</dbReference>
<dbReference type="GO" id="GO:0042132">
    <property type="term" value="F:fructose 1,6-bisphosphate 1-phosphatase activity"/>
    <property type="evidence" value="ECO:0007669"/>
    <property type="project" value="UniProtKB-UniRule"/>
</dbReference>
<dbReference type="GO" id="GO:0006094">
    <property type="term" value="P:gluconeogenesis"/>
    <property type="evidence" value="ECO:0007669"/>
    <property type="project" value="UniProtKB-UniRule"/>
</dbReference>
<dbReference type="Gene3D" id="3.60.21.10">
    <property type="match status" value="1"/>
</dbReference>
<dbReference type="HAMAP" id="MF_01854">
    <property type="entry name" value="FBPase_class3"/>
    <property type="match status" value="1"/>
</dbReference>
<dbReference type="InterPro" id="IPR009164">
    <property type="entry name" value="FBPtase_class3"/>
</dbReference>
<dbReference type="InterPro" id="IPR029052">
    <property type="entry name" value="Metallo-depent_PP-like"/>
</dbReference>
<dbReference type="Pfam" id="PF06874">
    <property type="entry name" value="FBPase_2"/>
    <property type="match status" value="1"/>
</dbReference>
<dbReference type="PIRSF" id="PIRSF000906">
    <property type="entry name" value="FBPtase_Bacill"/>
    <property type="match status" value="1"/>
</dbReference>
<dbReference type="SUPFAM" id="SSF56300">
    <property type="entry name" value="Metallo-dependent phosphatases"/>
    <property type="match status" value="1"/>
</dbReference>
<feature type="chain" id="PRO_0000363086" description="Fructose-1,6-bisphosphatase class 3">
    <location>
        <begin position="1"/>
        <end position="668"/>
    </location>
</feature>